<accession>A4VZN1</accession>
<gene>
    <name evidence="1" type="primary">fmt</name>
    <name type="ordered locus">SSU98_0412</name>
</gene>
<keyword id="KW-0648">Protein biosynthesis</keyword>
<keyword id="KW-0808">Transferase</keyword>
<comment type="function">
    <text evidence="1">Attaches a formyl group to the free amino group of methionyl-tRNA(fMet). The formyl group appears to play a dual role in the initiator identity of N-formylmethionyl-tRNA by promoting its recognition by IF2 and preventing the misappropriation of this tRNA by the elongation apparatus.</text>
</comment>
<comment type="catalytic activity">
    <reaction evidence="1">
        <text>L-methionyl-tRNA(fMet) + (6R)-10-formyltetrahydrofolate = N-formyl-L-methionyl-tRNA(fMet) + (6S)-5,6,7,8-tetrahydrofolate + H(+)</text>
        <dbReference type="Rhea" id="RHEA:24380"/>
        <dbReference type="Rhea" id="RHEA-COMP:9952"/>
        <dbReference type="Rhea" id="RHEA-COMP:9953"/>
        <dbReference type="ChEBI" id="CHEBI:15378"/>
        <dbReference type="ChEBI" id="CHEBI:57453"/>
        <dbReference type="ChEBI" id="CHEBI:78530"/>
        <dbReference type="ChEBI" id="CHEBI:78844"/>
        <dbReference type="ChEBI" id="CHEBI:195366"/>
        <dbReference type="EC" id="2.1.2.9"/>
    </reaction>
</comment>
<comment type="similarity">
    <text evidence="1">Belongs to the Fmt family.</text>
</comment>
<feature type="chain" id="PRO_1000020183" description="Methionyl-tRNA formyltransferase">
    <location>
        <begin position="1"/>
        <end position="312"/>
    </location>
</feature>
<feature type="binding site" evidence="1">
    <location>
        <begin position="110"/>
        <end position="113"/>
    </location>
    <ligand>
        <name>(6S)-5,6,7,8-tetrahydrofolate</name>
        <dbReference type="ChEBI" id="CHEBI:57453"/>
    </ligand>
</feature>
<reference key="1">
    <citation type="journal article" date="2007" name="PLoS ONE">
        <title>A glimpse of streptococcal toxic shock syndrome from comparative genomics of S. suis 2 Chinese isolates.</title>
        <authorList>
            <person name="Chen C."/>
            <person name="Tang J."/>
            <person name="Dong W."/>
            <person name="Wang C."/>
            <person name="Feng Y."/>
            <person name="Wang J."/>
            <person name="Zheng F."/>
            <person name="Pan X."/>
            <person name="Liu D."/>
            <person name="Li M."/>
            <person name="Song Y."/>
            <person name="Zhu X."/>
            <person name="Sun H."/>
            <person name="Feng T."/>
            <person name="Guo Z."/>
            <person name="Ju A."/>
            <person name="Ge J."/>
            <person name="Dong Y."/>
            <person name="Sun W."/>
            <person name="Jiang Y."/>
            <person name="Wang J."/>
            <person name="Yan J."/>
            <person name="Yang H."/>
            <person name="Wang X."/>
            <person name="Gao G.F."/>
            <person name="Yang R."/>
            <person name="Wang J."/>
            <person name="Yu J."/>
        </authorList>
    </citation>
    <scope>NUCLEOTIDE SEQUENCE [LARGE SCALE GENOMIC DNA]</scope>
    <source>
        <strain>98HAH33</strain>
    </source>
</reference>
<proteinExistence type="inferred from homology"/>
<protein>
    <recommendedName>
        <fullName evidence="1">Methionyl-tRNA formyltransferase</fullName>
        <ecNumber evidence="1">2.1.2.9</ecNumber>
    </recommendedName>
</protein>
<dbReference type="EC" id="2.1.2.9" evidence="1"/>
<dbReference type="EMBL" id="CP000408">
    <property type="protein sequence ID" value="ABP91570.1"/>
    <property type="molecule type" value="Genomic_DNA"/>
</dbReference>
<dbReference type="SMR" id="A4VZN1"/>
<dbReference type="KEGG" id="ssv:SSU98_0412"/>
<dbReference type="HOGENOM" id="CLU_033347_1_1_9"/>
<dbReference type="GO" id="GO:0005829">
    <property type="term" value="C:cytosol"/>
    <property type="evidence" value="ECO:0007669"/>
    <property type="project" value="TreeGrafter"/>
</dbReference>
<dbReference type="GO" id="GO:0004479">
    <property type="term" value="F:methionyl-tRNA formyltransferase activity"/>
    <property type="evidence" value="ECO:0007669"/>
    <property type="project" value="UniProtKB-UniRule"/>
</dbReference>
<dbReference type="CDD" id="cd08646">
    <property type="entry name" value="FMT_core_Met-tRNA-FMT_N"/>
    <property type="match status" value="1"/>
</dbReference>
<dbReference type="CDD" id="cd08704">
    <property type="entry name" value="Met_tRNA_FMT_C"/>
    <property type="match status" value="1"/>
</dbReference>
<dbReference type="FunFam" id="3.40.50.170:FF:000004">
    <property type="entry name" value="Methionyl-tRNA formyltransferase"/>
    <property type="match status" value="1"/>
</dbReference>
<dbReference type="Gene3D" id="3.10.25.10">
    <property type="entry name" value="Formyl transferase, C-terminal domain"/>
    <property type="match status" value="1"/>
</dbReference>
<dbReference type="Gene3D" id="3.40.50.170">
    <property type="entry name" value="Formyl transferase, N-terminal domain"/>
    <property type="match status" value="1"/>
</dbReference>
<dbReference type="HAMAP" id="MF_00182">
    <property type="entry name" value="Formyl_trans"/>
    <property type="match status" value="1"/>
</dbReference>
<dbReference type="InterPro" id="IPR005794">
    <property type="entry name" value="Fmt"/>
</dbReference>
<dbReference type="InterPro" id="IPR005793">
    <property type="entry name" value="Formyl_trans_C"/>
</dbReference>
<dbReference type="InterPro" id="IPR037022">
    <property type="entry name" value="Formyl_trans_C_sf"/>
</dbReference>
<dbReference type="InterPro" id="IPR002376">
    <property type="entry name" value="Formyl_transf_N"/>
</dbReference>
<dbReference type="InterPro" id="IPR036477">
    <property type="entry name" value="Formyl_transf_N_sf"/>
</dbReference>
<dbReference type="InterPro" id="IPR011034">
    <property type="entry name" value="Formyl_transferase-like_C_sf"/>
</dbReference>
<dbReference type="InterPro" id="IPR001555">
    <property type="entry name" value="GART_AS"/>
</dbReference>
<dbReference type="InterPro" id="IPR044135">
    <property type="entry name" value="Met-tRNA-FMT_C"/>
</dbReference>
<dbReference type="InterPro" id="IPR041711">
    <property type="entry name" value="Met-tRNA-FMT_N"/>
</dbReference>
<dbReference type="NCBIfam" id="TIGR00460">
    <property type="entry name" value="fmt"/>
    <property type="match status" value="1"/>
</dbReference>
<dbReference type="PANTHER" id="PTHR11138">
    <property type="entry name" value="METHIONYL-TRNA FORMYLTRANSFERASE"/>
    <property type="match status" value="1"/>
</dbReference>
<dbReference type="PANTHER" id="PTHR11138:SF5">
    <property type="entry name" value="METHIONYL-TRNA FORMYLTRANSFERASE, MITOCHONDRIAL"/>
    <property type="match status" value="1"/>
</dbReference>
<dbReference type="Pfam" id="PF02911">
    <property type="entry name" value="Formyl_trans_C"/>
    <property type="match status" value="1"/>
</dbReference>
<dbReference type="Pfam" id="PF00551">
    <property type="entry name" value="Formyl_trans_N"/>
    <property type="match status" value="1"/>
</dbReference>
<dbReference type="SUPFAM" id="SSF50486">
    <property type="entry name" value="FMT C-terminal domain-like"/>
    <property type="match status" value="1"/>
</dbReference>
<dbReference type="SUPFAM" id="SSF53328">
    <property type="entry name" value="Formyltransferase"/>
    <property type="match status" value="1"/>
</dbReference>
<dbReference type="PROSITE" id="PS00373">
    <property type="entry name" value="GART"/>
    <property type="match status" value="1"/>
</dbReference>
<evidence type="ECO:0000255" key="1">
    <source>
        <dbReference type="HAMAP-Rule" id="MF_00182"/>
    </source>
</evidence>
<sequence length="312" mass="33949">MTKLIFMGTPAFSATVLRGLLADGNYNILAVVTQPDRAVGRKKVIQMTPVKEVALEYNLPVYQPEKLSGSQEMDELMNLGADGIVTAAFGQFLPTKLLNSVDFAVNVHASLLPKYRGGAPIHYALINGDERAGVTIMEMVKEMDAGDMISSDSIAIEESDNVGTLFEKLAVVGRDLLLQTLPAYIAGDLKPVAQNPEQVTFSPNIQPEEEVLDWNKTARQLFNQIRGMYPWPVAHTYWQGERFKIQEAVEAEGEGSVGRVIARSKKELIIATGQGALSLKTVQPAGKPKMTIADFLNGAGRDIAVGDQFGDQ</sequence>
<name>FMT_STRS2</name>
<organism>
    <name type="scientific">Streptococcus suis (strain 98HAH33)</name>
    <dbReference type="NCBI Taxonomy" id="391296"/>
    <lineage>
        <taxon>Bacteria</taxon>
        <taxon>Bacillati</taxon>
        <taxon>Bacillota</taxon>
        <taxon>Bacilli</taxon>
        <taxon>Lactobacillales</taxon>
        <taxon>Streptococcaceae</taxon>
        <taxon>Streptococcus</taxon>
    </lineage>
</organism>